<gene>
    <name type="primary">rps7</name>
</gene>
<feature type="chain" id="PRO_0000344360" description="Small ribosomal subunit protein uS7c">
    <location>
        <begin position="1"/>
        <end position="156"/>
    </location>
</feature>
<evidence type="ECO:0000250" key="1"/>
<evidence type="ECO:0000305" key="2"/>
<proteinExistence type="inferred from homology"/>
<accession>A6MW27</accession>
<reference key="1">
    <citation type="journal article" date="2007" name="Mol. Biol. Evol.">
        <title>Plastid genome sequence of the cryptophyte alga Rhodomonas salina CCMP1319: lateral transfer of putative DNA replication machinery and a test of chromist plastid phylogeny.</title>
        <authorList>
            <person name="Khan H."/>
            <person name="Parks N."/>
            <person name="Kozera C."/>
            <person name="Curtis B.A."/>
            <person name="Parsons B.J."/>
            <person name="Bowman S."/>
            <person name="Archibald J.M."/>
        </authorList>
    </citation>
    <scope>NUCLEOTIDE SEQUENCE [LARGE SCALE GENOMIC DNA]</scope>
    <source>
        <strain>CCMP1319 / NEPCC76 / CS-174</strain>
    </source>
</reference>
<dbReference type="EMBL" id="EF508371">
    <property type="protein sequence ID" value="ABO70790.1"/>
    <property type="molecule type" value="Genomic_DNA"/>
</dbReference>
<dbReference type="RefSeq" id="YP_001293606.1">
    <property type="nucleotide sequence ID" value="NC_009573.1"/>
</dbReference>
<dbReference type="SMR" id="A6MW27"/>
<dbReference type="GeneID" id="5228681"/>
<dbReference type="GO" id="GO:0009507">
    <property type="term" value="C:chloroplast"/>
    <property type="evidence" value="ECO:0007669"/>
    <property type="project" value="UniProtKB-SubCell"/>
</dbReference>
<dbReference type="GO" id="GO:0015935">
    <property type="term" value="C:small ribosomal subunit"/>
    <property type="evidence" value="ECO:0007669"/>
    <property type="project" value="InterPro"/>
</dbReference>
<dbReference type="GO" id="GO:0019843">
    <property type="term" value="F:rRNA binding"/>
    <property type="evidence" value="ECO:0007669"/>
    <property type="project" value="UniProtKB-UniRule"/>
</dbReference>
<dbReference type="GO" id="GO:0003735">
    <property type="term" value="F:structural constituent of ribosome"/>
    <property type="evidence" value="ECO:0007669"/>
    <property type="project" value="InterPro"/>
</dbReference>
<dbReference type="GO" id="GO:0006412">
    <property type="term" value="P:translation"/>
    <property type="evidence" value="ECO:0007669"/>
    <property type="project" value="UniProtKB-UniRule"/>
</dbReference>
<dbReference type="CDD" id="cd14871">
    <property type="entry name" value="uS7_Chloroplast"/>
    <property type="match status" value="1"/>
</dbReference>
<dbReference type="FunFam" id="1.10.455.10:FF:000001">
    <property type="entry name" value="30S ribosomal protein S7"/>
    <property type="match status" value="1"/>
</dbReference>
<dbReference type="Gene3D" id="1.10.455.10">
    <property type="entry name" value="Ribosomal protein S7 domain"/>
    <property type="match status" value="1"/>
</dbReference>
<dbReference type="HAMAP" id="MF_00480_B">
    <property type="entry name" value="Ribosomal_uS7_B"/>
    <property type="match status" value="1"/>
</dbReference>
<dbReference type="InterPro" id="IPR000235">
    <property type="entry name" value="Ribosomal_uS7"/>
</dbReference>
<dbReference type="InterPro" id="IPR005717">
    <property type="entry name" value="Ribosomal_uS7_bac/org-type"/>
</dbReference>
<dbReference type="InterPro" id="IPR020606">
    <property type="entry name" value="Ribosomal_uS7_CS"/>
</dbReference>
<dbReference type="InterPro" id="IPR023798">
    <property type="entry name" value="Ribosomal_uS7_dom"/>
</dbReference>
<dbReference type="InterPro" id="IPR036823">
    <property type="entry name" value="Ribosomal_uS7_dom_sf"/>
</dbReference>
<dbReference type="NCBIfam" id="TIGR01029">
    <property type="entry name" value="rpsG_bact"/>
    <property type="match status" value="1"/>
</dbReference>
<dbReference type="PANTHER" id="PTHR11205">
    <property type="entry name" value="RIBOSOMAL PROTEIN S7"/>
    <property type="match status" value="1"/>
</dbReference>
<dbReference type="Pfam" id="PF00177">
    <property type="entry name" value="Ribosomal_S7"/>
    <property type="match status" value="1"/>
</dbReference>
<dbReference type="PIRSF" id="PIRSF002122">
    <property type="entry name" value="RPS7p_RPS7a_RPS5e_RPS7o"/>
    <property type="match status" value="1"/>
</dbReference>
<dbReference type="SUPFAM" id="SSF47973">
    <property type="entry name" value="Ribosomal protein S7"/>
    <property type="match status" value="1"/>
</dbReference>
<dbReference type="PROSITE" id="PS00052">
    <property type="entry name" value="RIBOSOMAL_S7"/>
    <property type="match status" value="1"/>
</dbReference>
<geneLocation type="chloroplast"/>
<protein>
    <recommendedName>
        <fullName evidence="2">Small ribosomal subunit protein uS7c</fullName>
    </recommendedName>
    <alternativeName>
        <fullName>30S ribosomal protein S7, chloroplastic</fullName>
    </alternativeName>
</protein>
<organism>
    <name type="scientific">Rhodomonas salina</name>
    <name type="common">Cryptomonas salina</name>
    <dbReference type="NCBI Taxonomy" id="52970"/>
    <lineage>
        <taxon>Eukaryota</taxon>
        <taxon>Cryptophyceae</taxon>
        <taxon>Pyrenomonadales</taxon>
        <taxon>Pyrenomonadaceae</taxon>
        <taxon>Rhodomonas</taxon>
    </lineage>
</organism>
<sequence>MSRRTTAKKRLAVPDPIYNSRLVSMLTVRILQQGKKHLAQRIIYQALDIIKERTGEDALNILETAVRKVTPLVEVKARRIGGSTYQVPMEVRAFRGTNLALRWITKYSKERSGKSMAMKLANEIMDAVNETGNSVRKREEVHKMAEANKAFAHYRF</sequence>
<comment type="function">
    <text evidence="1">One of the primary rRNA binding proteins, it binds directly to 16S rRNA where it nucleates assembly of the head domain of the 30S subunit.</text>
</comment>
<comment type="subunit">
    <text evidence="1">Part of the 30S ribosomal subunit.</text>
</comment>
<comment type="subcellular location">
    <subcellularLocation>
        <location>Plastid</location>
        <location>Chloroplast</location>
    </subcellularLocation>
</comment>
<comment type="similarity">
    <text evidence="2">Belongs to the universal ribosomal protein uS7 family.</text>
</comment>
<name>RR7_RHDSA</name>
<keyword id="KW-0150">Chloroplast</keyword>
<keyword id="KW-0934">Plastid</keyword>
<keyword id="KW-0687">Ribonucleoprotein</keyword>
<keyword id="KW-0689">Ribosomal protein</keyword>
<keyword id="KW-0694">RNA-binding</keyword>
<keyword id="KW-0699">rRNA-binding</keyword>